<name>RAB35_RAT</name>
<dbReference type="EC" id="3.6.5.2" evidence="3"/>
<dbReference type="EMBL" id="BC085769">
    <property type="protein sequence ID" value="AAH85769.1"/>
    <property type="molecule type" value="mRNA"/>
</dbReference>
<dbReference type="RefSeq" id="NP_001013064.1">
    <property type="nucleotide sequence ID" value="NM_001013046.1"/>
</dbReference>
<dbReference type="SMR" id="Q5U316"/>
<dbReference type="FunCoup" id="Q5U316">
    <property type="interactions" value="3658"/>
</dbReference>
<dbReference type="STRING" id="10116.ENSRNOP00000029070"/>
<dbReference type="iPTMnet" id="Q5U316"/>
<dbReference type="PhosphoSitePlus" id="Q5U316"/>
<dbReference type="jPOST" id="Q5U316"/>
<dbReference type="PaxDb" id="10116-ENSRNOP00000029070"/>
<dbReference type="GeneID" id="288700"/>
<dbReference type="KEGG" id="rno:288700"/>
<dbReference type="UCSC" id="RGD:1306362">
    <property type="organism name" value="rat"/>
</dbReference>
<dbReference type="AGR" id="RGD:1306362"/>
<dbReference type="CTD" id="11021"/>
<dbReference type="RGD" id="1306362">
    <property type="gene designation" value="Rab35"/>
</dbReference>
<dbReference type="VEuPathDB" id="HostDB:ENSRNOG00000022014"/>
<dbReference type="eggNOG" id="KOG0079">
    <property type="taxonomic scope" value="Eukaryota"/>
</dbReference>
<dbReference type="HOGENOM" id="CLU_041217_10_1_1"/>
<dbReference type="InParanoid" id="Q5U316"/>
<dbReference type="OrthoDB" id="9989112at2759"/>
<dbReference type="PhylomeDB" id="Q5U316"/>
<dbReference type="TreeFam" id="TF105954"/>
<dbReference type="Reactome" id="R-RNO-8854214">
    <property type="pathway name" value="TBC/RABGAPs"/>
</dbReference>
<dbReference type="Reactome" id="R-RNO-8873719">
    <property type="pathway name" value="RAB geranylgeranylation"/>
</dbReference>
<dbReference type="Reactome" id="R-RNO-8876198">
    <property type="pathway name" value="RAB GEFs exchange GTP for GDP on RABs"/>
</dbReference>
<dbReference type="PRO" id="PR:Q5U316"/>
<dbReference type="Proteomes" id="UP000002494">
    <property type="component" value="Chromosome 12"/>
</dbReference>
<dbReference type="Bgee" id="ENSRNOG00000022014">
    <property type="expression patterns" value="Expressed in thymus and 20 other cell types or tissues"/>
</dbReference>
<dbReference type="GO" id="GO:0031253">
    <property type="term" value="C:cell projection membrane"/>
    <property type="evidence" value="ECO:0000266"/>
    <property type="project" value="RGD"/>
</dbReference>
<dbReference type="GO" id="GO:0045334">
    <property type="term" value="C:clathrin-coated endocytic vesicle"/>
    <property type="evidence" value="ECO:0000266"/>
    <property type="project" value="RGD"/>
</dbReference>
<dbReference type="GO" id="GO:0005905">
    <property type="term" value="C:clathrin-coated pit"/>
    <property type="evidence" value="ECO:0000266"/>
    <property type="project" value="RGD"/>
</dbReference>
<dbReference type="GO" id="GO:0010008">
    <property type="term" value="C:endosome membrane"/>
    <property type="evidence" value="ECO:0000314"/>
    <property type="project" value="UniProtKB"/>
</dbReference>
<dbReference type="GO" id="GO:0045171">
    <property type="term" value="C:intercellular bridge"/>
    <property type="evidence" value="ECO:0000266"/>
    <property type="project" value="RGD"/>
</dbReference>
<dbReference type="GO" id="GO:0042470">
    <property type="term" value="C:melanosome"/>
    <property type="evidence" value="ECO:0007669"/>
    <property type="project" value="UniProtKB-SubCell"/>
</dbReference>
<dbReference type="GO" id="GO:0005886">
    <property type="term" value="C:plasma membrane"/>
    <property type="evidence" value="ECO:0000250"/>
    <property type="project" value="UniProtKB"/>
</dbReference>
<dbReference type="GO" id="GO:0030672">
    <property type="term" value="C:synaptic vesicle membrane"/>
    <property type="evidence" value="ECO:0000314"/>
    <property type="project" value="SynGO-UCL"/>
</dbReference>
<dbReference type="GO" id="GO:0003925">
    <property type="term" value="F:G protein activity"/>
    <property type="evidence" value="ECO:0000250"/>
    <property type="project" value="UniProtKB"/>
</dbReference>
<dbReference type="GO" id="GO:0019003">
    <property type="term" value="F:GDP binding"/>
    <property type="evidence" value="ECO:0000250"/>
    <property type="project" value="UniProtKB"/>
</dbReference>
<dbReference type="GO" id="GO:0005525">
    <property type="term" value="F:GTP binding"/>
    <property type="evidence" value="ECO:0000250"/>
    <property type="project" value="UniProtKB"/>
</dbReference>
<dbReference type="GO" id="GO:0003924">
    <property type="term" value="F:GTPase activity"/>
    <property type="evidence" value="ECO:0000250"/>
    <property type="project" value="UniProtKB"/>
</dbReference>
<dbReference type="GO" id="GO:0005546">
    <property type="term" value="F:phosphatidylinositol-4,5-bisphosphate binding"/>
    <property type="evidence" value="ECO:0000266"/>
    <property type="project" value="RGD"/>
</dbReference>
<dbReference type="GO" id="GO:0019882">
    <property type="term" value="P:antigen processing and presentation"/>
    <property type="evidence" value="ECO:0000266"/>
    <property type="project" value="RGD"/>
</dbReference>
<dbReference type="GO" id="GO:1990090">
    <property type="term" value="P:cellular response to nerve growth factor stimulus"/>
    <property type="evidence" value="ECO:0000314"/>
    <property type="project" value="UniProtKB"/>
</dbReference>
<dbReference type="GO" id="GO:0032456">
    <property type="term" value="P:endocytic recycling"/>
    <property type="evidence" value="ECO:0000318"/>
    <property type="project" value="GO_Central"/>
</dbReference>
<dbReference type="GO" id="GO:0016197">
    <property type="term" value="P:endosomal transport"/>
    <property type="evidence" value="ECO:0000250"/>
    <property type="project" value="UniProtKB"/>
</dbReference>
<dbReference type="GO" id="GO:0000281">
    <property type="term" value="P:mitotic cytokinesis"/>
    <property type="evidence" value="ECO:0000266"/>
    <property type="project" value="RGD"/>
</dbReference>
<dbReference type="GO" id="GO:0031175">
    <property type="term" value="P:neuron projection development"/>
    <property type="evidence" value="ECO:0000250"/>
    <property type="project" value="UniProtKB"/>
</dbReference>
<dbReference type="GO" id="GO:0048227">
    <property type="term" value="P:plasma membrane to endosome transport"/>
    <property type="evidence" value="ECO:0000266"/>
    <property type="project" value="RGD"/>
</dbReference>
<dbReference type="GO" id="GO:0008104">
    <property type="term" value="P:protein localization"/>
    <property type="evidence" value="ECO:0000266"/>
    <property type="project" value="RGD"/>
</dbReference>
<dbReference type="GO" id="GO:0036010">
    <property type="term" value="P:protein localization to endosome"/>
    <property type="evidence" value="ECO:0000315"/>
    <property type="project" value="UniProtKB"/>
</dbReference>
<dbReference type="GO" id="GO:0015031">
    <property type="term" value="P:protein transport"/>
    <property type="evidence" value="ECO:0007669"/>
    <property type="project" value="UniProtKB-KW"/>
</dbReference>
<dbReference type="GO" id="GO:0032482">
    <property type="term" value="P:Rab protein signal transduction"/>
    <property type="evidence" value="ECO:0007669"/>
    <property type="project" value="InterPro"/>
</dbReference>
<dbReference type="CDD" id="cd04110">
    <property type="entry name" value="Rab35"/>
    <property type="match status" value="1"/>
</dbReference>
<dbReference type="FunFam" id="3.40.50.300:FF:000404">
    <property type="entry name" value="Putative ras-related protein Rab-35"/>
    <property type="match status" value="1"/>
</dbReference>
<dbReference type="Gene3D" id="3.40.50.300">
    <property type="entry name" value="P-loop containing nucleotide triphosphate hydrolases"/>
    <property type="match status" value="1"/>
</dbReference>
<dbReference type="InterPro" id="IPR027417">
    <property type="entry name" value="P-loop_NTPase"/>
</dbReference>
<dbReference type="InterPro" id="IPR050227">
    <property type="entry name" value="Rab"/>
</dbReference>
<dbReference type="InterPro" id="IPR041815">
    <property type="entry name" value="Rab35"/>
</dbReference>
<dbReference type="InterPro" id="IPR005225">
    <property type="entry name" value="Small_GTP-bd"/>
</dbReference>
<dbReference type="InterPro" id="IPR001806">
    <property type="entry name" value="Small_GTPase"/>
</dbReference>
<dbReference type="NCBIfam" id="TIGR00231">
    <property type="entry name" value="small_GTP"/>
    <property type="match status" value="1"/>
</dbReference>
<dbReference type="PANTHER" id="PTHR47977">
    <property type="entry name" value="RAS-RELATED PROTEIN RAB"/>
    <property type="match status" value="1"/>
</dbReference>
<dbReference type="Pfam" id="PF00071">
    <property type="entry name" value="Ras"/>
    <property type="match status" value="1"/>
</dbReference>
<dbReference type="PRINTS" id="PR00449">
    <property type="entry name" value="RASTRNSFRMNG"/>
</dbReference>
<dbReference type="SMART" id="SM00177">
    <property type="entry name" value="ARF"/>
    <property type="match status" value="1"/>
</dbReference>
<dbReference type="SMART" id="SM00175">
    <property type="entry name" value="RAB"/>
    <property type="match status" value="1"/>
</dbReference>
<dbReference type="SMART" id="SM00176">
    <property type="entry name" value="RAN"/>
    <property type="match status" value="1"/>
</dbReference>
<dbReference type="SMART" id="SM00173">
    <property type="entry name" value="RAS"/>
    <property type="match status" value="1"/>
</dbReference>
<dbReference type="SMART" id="SM00174">
    <property type="entry name" value="RHO"/>
    <property type="match status" value="1"/>
</dbReference>
<dbReference type="SUPFAM" id="SSF52540">
    <property type="entry name" value="P-loop containing nucleoside triphosphate hydrolases"/>
    <property type="match status" value="1"/>
</dbReference>
<dbReference type="PROSITE" id="PS51419">
    <property type="entry name" value="RAB"/>
    <property type="match status" value="1"/>
</dbReference>
<evidence type="ECO:0000250" key="1"/>
<evidence type="ECO:0000250" key="2">
    <source>
        <dbReference type="UniProtKB" id="Q15286"/>
    </source>
</evidence>
<evidence type="ECO:0000250" key="3">
    <source>
        <dbReference type="UniProtKB" id="Q6PHN9"/>
    </source>
</evidence>
<evidence type="ECO:0000269" key="4">
    <source>
    </source>
</evidence>
<evidence type="ECO:0000305" key="5"/>
<evidence type="ECO:0000312" key="6">
    <source>
        <dbReference type="RGD" id="1306362"/>
    </source>
</evidence>
<gene>
    <name evidence="6" type="primary">Rab35</name>
</gene>
<sequence>MARDYDHLFKLLIIGDSGVGKSSLLLRFADNTFSGSYITTIGVDFKIRTVEINGEKVKLQIWDTAGQERFRTITSTYYRGTHGVIVVYDVTSAESFVNVKRWLHEINQNCDDVCRILVGNKNDDPERKVVETEDAYKFAGQMGIQLFETSAKENVNVEEMFNCITELVLRAKKDNLAKQQQQQQNDVVKLTKNSKRKKRCC</sequence>
<reference key="1">
    <citation type="journal article" date="2004" name="Genome Res.">
        <title>The status, quality, and expansion of the NIH full-length cDNA project: the Mammalian Gene Collection (MGC).</title>
        <authorList>
            <consortium name="The MGC Project Team"/>
        </authorList>
    </citation>
    <scope>NUCLEOTIDE SEQUENCE [LARGE SCALE MRNA]</scope>
    <source>
        <tissue>Testis</tissue>
    </source>
</reference>
<reference key="2">
    <citation type="journal article" date="2013" name="J. Cell Sci.">
        <title>Rab35 establishes the EHD1-association site by coordinating two distinct effectors during neurite outgrowth.</title>
        <authorList>
            <person name="Kobayashi H."/>
            <person name="Fukuda M."/>
        </authorList>
    </citation>
    <scope>INTERACTION WITH ACAP2; EHD1 AND MICALL1</scope>
    <scope>SUBCELLULAR LOCATION</scope>
</reference>
<feature type="chain" id="PRO_0000121247" description="Ras-related protein Rab-35">
    <location>
        <begin position="1"/>
        <end position="201"/>
    </location>
</feature>
<feature type="short sequence motif" description="Switch 1" evidence="2">
    <location>
        <begin position="30"/>
        <end position="42"/>
    </location>
</feature>
<feature type="short sequence motif" description="Effector region" evidence="1">
    <location>
        <begin position="37"/>
        <end position="45"/>
    </location>
</feature>
<feature type="short sequence motif" description="Switch 2" evidence="2">
    <location>
        <begin position="64"/>
        <end position="80"/>
    </location>
</feature>
<feature type="binding site" evidence="2">
    <location>
        <position position="18"/>
    </location>
    <ligand>
        <name>GTP</name>
        <dbReference type="ChEBI" id="CHEBI:37565"/>
    </ligand>
</feature>
<feature type="binding site" evidence="2">
    <location>
        <position position="19"/>
    </location>
    <ligand>
        <name>GTP</name>
        <dbReference type="ChEBI" id="CHEBI:37565"/>
    </ligand>
</feature>
<feature type="binding site" evidence="2">
    <location>
        <position position="20"/>
    </location>
    <ligand>
        <name>GTP</name>
        <dbReference type="ChEBI" id="CHEBI:37565"/>
    </ligand>
</feature>
<feature type="binding site" evidence="2">
    <location>
        <position position="21"/>
    </location>
    <ligand>
        <name>GTP</name>
        <dbReference type="ChEBI" id="CHEBI:37565"/>
    </ligand>
</feature>
<feature type="binding site" evidence="2">
    <location>
        <position position="22"/>
    </location>
    <ligand>
        <name>GTP</name>
        <dbReference type="ChEBI" id="CHEBI:37565"/>
    </ligand>
</feature>
<feature type="binding site" evidence="2">
    <location>
        <position position="22"/>
    </location>
    <ligand>
        <name>Mg(2+)</name>
        <dbReference type="ChEBI" id="CHEBI:18420"/>
    </ligand>
</feature>
<feature type="binding site" evidence="2">
    <location>
        <position position="23"/>
    </location>
    <ligand>
        <name>GTP</name>
        <dbReference type="ChEBI" id="CHEBI:37565"/>
    </ligand>
</feature>
<feature type="binding site" evidence="2">
    <location>
        <position position="34"/>
    </location>
    <ligand>
        <name>GTP</name>
        <dbReference type="ChEBI" id="CHEBI:37565"/>
    </ligand>
</feature>
<feature type="binding site" evidence="2">
    <location>
        <position position="35"/>
    </location>
    <ligand>
        <name>GTP</name>
        <dbReference type="ChEBI" id="CHEBI:37565"/>
    </ligand>
</feature>
<feature type="binding site" evidence="2">
    <location>
        <position position="37"/>
    </location>
    <ligand>
        <name>GTP</name>
        <dbReference type="ChEBI" id="CHEBI:37565"/>
    </ligand>
</feature>
<feature type="binding site" evidence="2">
    <location>
        <position position="39"/>
    </location>
    <ligand>
        <name>GTP</name>
        <dbReference type="ChEBI" id="CHEBI:37565"/>
    </ligand>
</feature>
<feature type="binding site" evidence="2">
    <location>
        <position position="40"/>
    </location>
    <ligand>
        <name>GTP</name>
        <dbReference type="ChEBI" id="CHEBI:37565"/>
    </ligand>
</feature>
<feature type="binding site" evidence="2">
    <location>
        <position position="40"/>
    </location>
    <ligand>
        <name>Mg(2+)</name>
        <dbReference type="ChEBI" id="CHEBI:18420"/>
    </ligand>
</feature>
<feature type="binding site" evidence="2">
    <location>
        <position position="63"/>
    </location>
    <ligand>
        <name>Mg(2+)</name>
        <dbReference type="ChEBI" id="CHEBI:18420"/>
    </ligand>
</feature>
<feature type="binding site" evidence="2">
    <location>
        <position position="66"/>
    </location>
    <ligand>
        <name>GTP</name>
        <dbReference type="ChEBI" id="CHEBI:37565"/>
    </ligand>
</feature>
<feature type="binding site" evidence="2">
    <location>
        <position position="120"/>
    </location>
    <ligand>
        <name>GTP</name>
        <dbReference type="ChEBI" id="CHEBI:37565"/>
    </ligand>
</feature>
<feature type="binding site" evidence="2">
    <location>
        <position position="121"/>
    </location>
    <ligand>
        <name>GTP</name>
        <dbReference type="ChEBI" id="CHEBI:37565"/>
    </ligand>
</feature>
<feature type="binding site" evidence="2">
    <location>
        <position position="123"/>
    </location>
    <ligand>
        <name>GTP</name>
        <dbReference type="ChEBI" id="CHEBI:37565"/>
    </ligand>
</feature>
<feature type="binding site" evidence="2">
    <location>
        <position position="151"/>
    </location>
    <ligand>
        <name>GTP</name>
        <dbReference type="ChEBI" id="CHEBI:37565"/>
    </ligand>
</feature>
<feature type="binding site" evidence="2">
    <location>
        <position position="152"/>
    </location>
    <ligand>
        <name>GTP</name>
        <dbReference type="ChEBI" id="CHEBI:37565"/>
    </ligand>
</feature>
<feature type="modified residue" description="Phosphothreonine" evidence="2">
    <location>
        <position position="72"/>
    </location>
</feature>
<feature type="modified residue" description="O-(2-cholinephosphoryl)serine" evidence="2">
    <location>
        <position position="75"/>
    </location>
</feature>
<feature type="lipid moiety-binding region" description="S-geranylgeranyl cysteine" evidence="1">
    <location>
        <position position="200"/>
    </location>
</feature>
<feature type="lipid moiety-binding region" description="S-geranylgeranyl cysteine" evidence="1">
    <location>
        <position position="201"/>
    </location>
</feature>
<comment type="function">
    <text evidence="2 3">The small GTPases Rab are key regulators of intracellular membrane trafficking, from the formation of transport vesicles to their fusion with membranes. Rabs cycle between an inactive GDP-bound form and an active GTP-bound form that is able to recruit to membranes different sets of downstream effectors directly responsible for vesicle formation, movement, tethering and fusion. That Rab is involved in the process of endocytosis and is an essential rate-limiting regulator of the fast recycling pathway back to the plasma membrane. During cytokinesis, required for the postfurrowing terminal steps, namely for intercellular bridge stability and abscission, possibly by controlling phosphatidylinositol 4,5-bis phosphate (PIP2) and SEPT2 localization at the intercellular bridge. May indirectly regulate neurite outgrowth. Together with TBC1D13 may be involved in regulation of insulin-induced glucose transporter SLC2A4/GLUT4 translocation to the plasma membrane in adipocytes (By similarity).</text>
</comment>
<comment type="catalytic activity">
    <reaction evidence="3">
        <text>GTP + H2O = GDP + phosphate + H(+)</text>
        <dbReference type="Rhea" id="RHEA:19669"/>
        <dbReference type="ChEBI" id="CHEBI:15377"/>
        <dbReference type="ChEBI" id="CHEBI:15378"/>
        <dbReference type="ChEBI" id="CHEBI:37565"/>
        <dbReference type="ChEBI" id="CHEBI:43474"/>
        <dbReference type="ChEBI" id="CHEBI:58189"/>
        <dbReference type="EC" id="3.6.5.2"/>
    </reaction>
    <physiologicalReaction direction="left-to-right" evidence="3">
        <dbReference type="Rhea" id="RHEA:19670"/>
    </physiologicalReaction>
</comment>
<comment type="cofactor">
    <cofactor evidence="2">
        <name>Mg(2+)</name>
        <dbReference type="ChEBI" id="CHEBI:18420"/>
    </cofactor>
</comment>
<comment type="activity regulation">
    <text evidence="3">Regulated by guanine nucleotide exchange factors (GEFs) including DENND1A, DENND1B and DENND1C which promote the exchange of bound GDP for free GTP. Regulated by GTPase activating proteins (GAPs) including TBC1D10 and TBC1D13 which increase GTP hydrolysis activity. Inhibited by GDP dissociation inhibitors (GDIs) which prevent Rab-GDP dissociation.</text>
</comment>
<comment type="subunit">
    <text evidence="2 4">Interacts with DENND1A and DENND1B; in a nucleotide-dependent manner. Interacts with DENND1C; weak interaction which is nucleotide-independent (By similarity). Interacts (GTP-bound form) with ACAP2, RUSC2, OCRL MICAL1 and MICALL1; the interaction is direct and probably recruits these effectors to membranes (PubMed:23572513). Interacts with EHD1; the interaction is indirect through MICALL1 and probably recruits EHD1 to membranes (By similarity). Interacts with GDI1, GDI2 and CHM; phosphorylation at Thr-72 disrupts these interactions (By similarity).</text>
</comment>
<comment type="subcellular location">
    <subcellularLocation>
        <location evidence="2">Cell membrane</location>
        <topology evidence="5">Lipid-anchor</topology>
        <orientation evidence="5">Cytoplasmic side</orientation>
    </subcellularLocation>
    <subcellularLocation>
        <location evidence="2">Membrane</location>
        <location evidence="2">Clathrin-coated pit</location>
    </subcellularLocation>
    <subcellularLocation>
        <location evidence="2">Cytoplasmic vesicle</location>
        <location evidence="2">Clathrin-coated vesicle</location>
    </subcellularLocation>
    <subcellularLocation>
        <location evidence="4">Endosome</location>
    </subcellularLocation>
    <subcellularLocation>
        <location evidence="2">Melanosome</location>
    </subcellularLocation>
    <text evidence="2">Present on sorting endosomes and recycling endosome tubules. Tends to be enriched in PIP2-positive cell membrane domains. During mitosis, associated with the plasma membrane and present at the ingressing furrow during early cytokinesis as well as at the intercellular bridge later during cytokinesis. Identified in stage I to stage IV melanosomes.</text>
</comment>
<comment type="domain">
    <text evidence="2">Switch 1, switch 2 and the interswitch regions are characteristic of Rab GTPases and mediate the interactions with Rab downstream effectors. The switch regions undergo conformational changes upon nucleotide binding which drives interaction with specific sets of effector proteins, with most effectors only binding to GTP-bound Rab.</text>
</comment>
<comment type="similarity">
    <text evidence="5">Belongs to the small GTPase superfamily. Rab family.</text>
</comment>
<accession>Q5U316</accession>
<keyword id="KW-1003">Cell membrane</keyword>
<keyword id="KW-0168">Coated pit</keyword>
<keyword id="KW-0968">Cytoplasmic vesicle</keyword>
<keyword id="KW-0967">Endosome</keyword>
<keyword id="KW-0342">GTP-binding</keyword>
<keyword id="KW-0378">Hydrolase</keyword>
<keyword id="KW-0449">Lipoprotein</keyword>
<keyword id="KW-0460">Magnesium</keyword>
<keyword id="KW-0472">Membrane</keyword>
<keyword id="KW-0479">Metal-binding</keyword>
<keyword id="KW-0547">Nucleotide-binding</keyword>
<keyword id="KW-0597">Phosphoprotein</keyword>
<keyword id="KW-0636">Prenylation</keyword>
<keyword id="KW-0653">Protein transport</keyword>
<keyword id="KW-1185">Reference proteome</keyword>
<keyword id="KW-0813">Transport</keyword>
<proteinExistence type="evidence at protein level"/>
<organism>
    <name type="scientific">Rattus norvegicus</name>
    <name type="common">Rat</name>
    <dbReference type="NCBI Taxonomy" id="10116"/>
    <lineage>
        <taxon>Eukaryota</taxon>
        <taxon>Metazoa</taxon>
        <taxon>Chordata</taxon>
        <taxon>Craniata</taxon>
        <taxon>Vertebrata</taxon>
        <taxon>Euteleostomi</taxon>
        <taxon>Mammalia</taxon>
        <taxon>Eutheria</taxon>
        <taxon>Euarchontoglires</taxon>
        <taxon>Glires</taxon>
        <taxon>Rodentia</taxon>
        <taxon>Myomorpha</taxon>
        <taxon>Muroidea</taxon>
        <taxon>Muridae</taxon>
        <taxon>Murinae</taxon>
        <taxon>Rattus</taxon>
    </lineage>
</organism>
<protein>
    <recommendedName>
        <fullName>Ras-related protein Rab-35</fullName>
        <ecNumber evidence="3">3.6.5.2</ecNumber>
    </recommendedName>
</protein>